<accession>Q60330</accession>
<sequence length="98" mass="11733">MMRLNWQIRQVQLLLERLGLQQLVWMDCLVMMLNKAIFLDRDGVINKRLIGDYVKKIEEFELLPNVREALIEFKKMGYLLIVVTNQQGSKQFLIFYNL</sequence>
<gene>
    <name type="ordered locus">MJ0015</name>
</gene>
<proteinExistence type="predicted"/>
<protein>
    <recommendedName>
        <fullName>Uncharacterized protein MJ0015</fullName>
    </recommendedName>
</protein>
<reference key="1">
    <citation type="journal article" date="1996" name="Science">
        <title>Complete genome sequence of the methanogenic archaeon, Methanococcus jannaschii.</title>
        <authorList>
            <person name="Bult C.J."/>
            <person name="White O."/>
            <person name="Olsen G.J."/>
            <person name="Zhou L."/>
            <person name="Fleischmann R.D."/>
            <person name="Sutton G.G."/>
            <person name="Blake J.A."/>
            <person name="FitzGerald L.M."/>
            <person name="Clayton R.A."/>
            <person name="Gocayne J.D."/>
            <person name="Kerlavage A.R."/>
            <person name="Dougherty B.A."/>
            <person name="Tomb J.-F."/>
            <person name="Adams M.D."/>
            <person name="Reich C.I."/>
            <person name="Overbeek R."/>
            <person name="Kirkness E.F."/>
            <person name="Weinstock K.G."/>
            <person name="Merrick J.M."/>
            <person name="Glodek A."/>
            <person name="Scott J.L."/>
            <person name="Geoghagen N.S.M."/>
            <person name="Weidman J.F."/>
            <person name="Fuhrmann J.L."/>
            <person name="Nguyen D."/>
            <person name="Utterback T.R."/>
            <person name="Kelley J.M."/>
            <person name="Peterson J.D."/>
            <person name="Sadow P.W."/>
            <person name="Hanna M.C."/>
            <person name="Cotton M.D."/>
            <person name="Roberts K.M."/>
            <person name="Hurst M.A."/>
            <person name="Kaine B.P."/>
            <person name="Borodovsky M."/>
            <person name="Klenk H.-P."/>
            <person name="Fraser C.M."/>
            <person name="Smith H.O."/>
            <person name="Woese C.R."/>
            <person name="Venter J.C."/>
        </authorList>
    </citation>
    <scope>NUCLEOTIDE SEQUENCE [LARGE SCALE GENOMIC DNA]</scope>
    <source>
        <strain>ATCC 43067 / DSM 2661 / JAL-1 / JCM 10045 / NBRC 100440</strain>
    </source>
</reference>
<feature type="chain" id="PRO_0000106655" description="Uncharacterized protein MJ0015">
    <location>
        <begin position="1"/>
        <end position="98"/>
    </location>
</feature>
<organism>
    <name type="scientific">Methanocaldococcus jannaschii (strain ATCC 43067 / DSM 2661 / JAL-1 / JCM 10045 / NBRC 100440)</name>
    <name type="common">Methanococcus jannaschii</name>
    <dbReference type="NCBI Taxonomy" id="243232"/>
    <lineage>
        <taxon>Archaea</taxon>
        <taxon>Methanobacteriati</taxon>
        <taxon>Methanobacteriota</taxon>
        <taxon>Methanomada group</taxon>
        <taxon>Methanococci</taxon>
        <taxon>Methanococcales</taxon>
        <taxon>Methanocaldococcaceae</taxon>
        <taxon>Methanocaldococcus</taxon>
    </lineage>
</organism>
<keyword id="KW-1185">Reference proteome</keyword>
<dbReference type="EMBL" id="L77117">
    <property type="protein sequence ID" value="AAB97993.1"/>
    <property type="molecule type" value="Genomic_DNA"/>
</dbReference>
<dbReference type="PIR" id="G64301">
    <property type="entry name" value="G64301"/>
</dbReference>
<dbReference type="SMR" id="Q60330"/>
<dbReference type="STRING" id="243232.MJ_0015"/>
<dbReference type="PaxDb" id="243232-MJ_0015"/>
<dbReference type="EnsemblBacteria" id="AAB97993">
    <property type="protein sequence ID" value="AAB97993"/>
    <property type="gene ID" value="MJ_0015"/>
</dbReference>
<dbReference type="KEGG" id="mja:MJ_0015"/>
<dbReference type="eggNOG" id="arCOG07384">
    <property type="taxonomic scope" value="Archaea"/>
</dbReference>
<dbReference type="HOGENOM" id="CLU_2327284_0_0_2"/>
<dbReference type="InParanoid" id="Q60330"/>
<dbReference type="PhylomeDB" id="Q60330"/>
<dbReference type="Proteomes" id="UP000000805">
    <property type="component" value="Chromosome"/>
</dbReference>
<dbReference type="GO" id="GO:0016791">
    <property type="term" value="F:phosphatase activity"/>
    <property type="evidence" value="ECO:0007669"/>
    <property type="project" value="InterPro"/>
</dbReference>
<dbReference type="GO" id="GO:0005975">
    <property type="term" value="P:carbohydrate metabolic process"/>
    <property type="evidence" value="ECO:0007669"/>
    <property type="project" value="InterPro"/>
</dbReference>
<dbReference type="Gene3D" id="3.40.50.1000">
    <property type="entry name" value="HAD superfamily/HAD-like"/>
    <property type="match status" value="1"/>
</dbReference>
<dbReference type="InterPro" id="IPR036412">
    <property type="entry name" value="HAD-like_sf"/>
</dbReference>
<dbReference type="InterPro" id="IPR006549">
    <property type="entry name" value="HAD-SF_hydro_IIIA"/>
</dbReference>
<dbReference type="InterPro" id="IPR023214">
    <property type="entry name" value="HAD_sf"/>
</dbReference>
<dbReference type="InterPro" id="IPR004446">
    <property type="entry name" value="Heptose_bisP_phosphatase"/>
</dbReference>
<dbReference type="NCBIfam" id="TIGR01662">
    <property type="entry name" value="HAD-SF-IIIA"/>
    <property type="match status" value="1"/>
</dbReference>
<dbReference type="PANTHER" id="PTHR42891">
    <property type="entry name" value="D-GLYCERO-BETA-D-MANNO-HEPTOSE-1,7-BISPHOSPHATE 7-PHOSPHATASE"/>
    <property type="match status" value="1"/>
</dbReference>
<dbReference type="PANTHER" id="PTHR42891:SF1">
    <property type="entry name" value="D-GLYCERO-BETA-D-MANNO-HEPTOSE-1,7-BISPHOSPHATE 7-PHOSPHATASE"/>
    <property type="match status" value="1"/>
</dbReference>
<dbReference type="SUPFAM" id="SSF56784">
    <property type="entry name" value="HAD-like"/>
    <property type="match status" value="1"/>
</dbReference>
<name>Y015_METJA</name>